<protein>
    <recommendedName>
        <fullName>Testis-expressed protein 29</fullName>
    </recommendedName>
</protein>
<name>TEX29_HUMAN</name>
<accession>Q8N6K0</accession>
<gene>
    <name type="primary">TEX29</name>
    <name type="synonym">C13orf16</name>
</gene>
<feature type="chain" id="PRO_0000263699" description="Testis-expressed protein 29">
    <location>
        <begin position="1"/>
        <end position="151"/>
    </location>
</feature>
<feature type="topological domain" description="Extracellular" evidence="1">
    <location>
        <begin position="1"/>
        <end position="56"/>
    </location>
</feature>
<feature type="transmembrane region" description="Helical" evidence="1">
    <location>
        <begin position="57"/>
        <end position="77"/>
    </location>
</feature>
<feature type="topological domain" description="Cytoplasmic" evidence="1">
    <location>
        <begin position="78"/>
        <end position="151"/>
    </location>
</feature>
<feature type="region of interest" description="Disordered" evidence="2">
    <location>
        <begin position="100"/>
        <end position="151"/>
    </location>
</feature>
<feature type="compositionally biased region" description="Low complexity" evidence="2">
    <location>
        <begin position="107"/>
        <end position="119"/>
    </location>
</feature>
<proteinExistence type="evidence at protein level"/>
<evidence type="ECO:0000255" key="1"/>
<evidence type="ECO:0000256" key="2">
    <source>
        <dbReference type="SAM" id="MobiDB-lite"/>
    </source>
</evidence>
<evidence type="ECO:0000305" key="3"/>
<dbReference type="EMBL" id="AL160395">
    <property type="status" value="NOT_ANNOTATED_CDS"/>
    <property type="molecule type" value="Genomic_DNA"/>
</dbReference>
<dbReference type="EMBL" id="BC029889">
    <property type="protein sequence ID" value="AAH29889.1"/>
    <property type="molecule type" value="mRNA"/>
</dbReference>
<dbReference type="CCDS" id="CCDS9522.1"/>
<dbReference type="RefSeq" id="NP_001290062.1">
    <property type="nucleotide sequence ID" value="NM_001303133.1"/>
</dbReference>
<dbReference type="RefSeq" id="NP_689537.1">
    <property type="nucleotide sequence ID" value="NM_152324.3"/>
</dbReference>
<dbReference type="BioGRID" id="125748">
    <property type="interactions" value="48"/>
</dbReference>
<dbReference type="FunCoup" id="Q8N6K0">
    <property type="interactions" value="18"/>
</dbReference>
<dbReference type="IntAct" id="Q8N6K0">
    <property type="interactions" value="42"/>
</dbReference>
<dbReference type="STRING" id="9606.ENSP00000283547"/>
<dbReference type="BioMuta" id="TEX29"/>
<dbReference type="DMDM" id="74751059"/>
<dbReference type="MassIVE" id="Q8N6K0"/>
<dbReference type="PaxDb" id="9606-ENSP00000283547"/>
<dbReference type="PeptideAtlas" id="Q8N6K0"/>
<dbReference type="ProteomicsDB" id="72183"/>
<dbReference type="Antibodypedia" id="67738">
    <property type="antibodies" value="1 antibodies from 1 providers"/>
</dbReference>
<dbReference type="DNASU" id="121793"/>
<dbReference type="Ensembl" id="ENST00000283547.2">
    <property type="protein sequence ID" value="ENSP00000283547.1"/>
    <property type="gene ID" value="ENSG00000153495.11"/>
</dbReference>
<dbReference type="GeneID" id="121793"/>
<dbReference type="KEGG" id="hsa:121793"/>
<dbReference type="MANE-Select" id="ENST00000283547.2">
    <property type="protein sequence ID" value="ENSP00000283547.1"/>
    <property type="RefSeq nucleotide sequence ID" value="NM_152324.3"/>
    <property type="RefSeq protein sequence ID" value="NP_689537.1"/>
</dbReference>
<dbReference type="UCSC" id="uc001vsa.3">
    <property type="organism name" value="human"/>
</dbReference>
<dbReference type="AGR" id="HGNC:20370"/>
<dbReference type="CTD" id="121793"/>
<dbReference type="DisGeNET" id="121793"/>
<dbReference type="GeneCards" id="TEX29"/>
<dbReference type="HGNC" id="HGNC:20370">
    <property type="gene designation" value="TEX29"/>
</dbReference>
<dbReference type="HPA" id="ENSG00000153495">
    <property type="expression patterns" value="Tissue enriched (testis)"/>
</dbReference>
<dbReference type="neXtProt" id="NX_Q8N6K0"/>
<dbReference type="OpenTargets" id="ENSG00000153495"/>
<dbReference type="PharmGKB" id="PA134935852"/>
<dbReference type="VEuPathDB" id="HostDB:ENSG00000153495"/>
<dbReference type="eggNOG" id="ENOG502RWPU">
    <property type="taxonomic scope" value="Eukaryota"/>
</dbReference>
<dbReference type="GeneTree" id="ENSGT00510000049560"/>
<dbReference type="HOGENOM" id="CLU_147471_0_0_1"/>
<dbReference type="InParanoid" id="Q8N6K0"/>
<dbReference type="OMA" id="EPEFKKS"/>
<dbReference type="OrthoDB" id="9028469at2759"/>
<dbReference type="PAN-GO" id="Q8N6K0">
    <property type="GO annotations" value="0 GO annotations based on evolutionary models"/>
</dbReference>
<dbReference type="PhylomeDB" id="Q8N6K0"/>
<dbReference type="TreeFam" id="TF337066"/>
<dbReference type="PathwayCommons" id="Q8N6K0"/>
<dbReference type="SignaLink" id="Q8N6K0"/>
<dbReference type="BioGRID-ORCS" id="121793">
    <property type="hits" value="12 hits in 1153 CRISPR screens"/>
</dbReference>
<dbReference type="ChiTaRS" id="TEX29">
    <property type="organism name" value="human"/>
</dbReference>
<dbReference type="GenomeRNAi" id="121793"/>
<dbReference type="Pharos" id="Q8N6K0">
    <property type="development level" value="Tdark"/>
</dbReference>
<dbReference type="PRO" id="PR:Q8N6K0"/>
<dbReference type="Proteomes" id="UP000005640">
    <property type="component" value="Chromosome 13"/>
</dbReference>
<dbReference type="RNAct" id="Q8N6K0">
    <property type="molecule type" value="protein"/>
</dbReference>
<dbReference type="Bgee" id="ENSG00000153495">
    <property type="expression patterns" value="Expressed in left testis and 103 other cell types or tissues"/>
</dbReference>
<dbReference type="ExpressionAtlas" id="Q8N6K0">
    <property type="expression patterns" value="baseline and differential"/>
</dbReference>
<dbReference type="GO" id="GO:0016020">
    <property type="term" value="C:membrane"/>
    <property type="evidence" value="ECO:0007669"/>
    <property type="project" value="UniProtKB-SubCell"/>
</dbReference>
<dbReference type="InterPro" id="IPR031685">
    <property type="entry name" value="TEX29"/>
</dbReference>
<dbReference type="PANTHER" id="PTHR37339">
    <property type="entry name" value="TESTIS-EXPRESSED PROTEIN 29"/>
    <property type="match status" value="1"/>
</dbReference>
<dbReference type="PANTHER" id="PTHR37339:SF1">
    <property type="entry name" value="TESTIS-EXPRESSED PROTEIN 29"/>
    <property type="match status" value="1"/>
</dbReference>
<dbReference type="Pfam" id="PF15839">
    <property type="entry name" value="TEX29"/>
    <property type="match status" value="1"/>
</dbReference>
<comment type="interaction">
    <interactant intactId="EBI-19027521">
        <id>Q8N6K0</id>
    </interactant>
    <interactant intactId="EBI-715495">
        <id>P05090</id>
        <label>APOD</label>
    </interactant>
    <organismsDiffer>false</organismsDiffer>
    <experiments>3</experiments>
</comment>
<comment type="interaction">
    <interactant intactId="EBI-19027521">
        <id>Q8N6K0</id>
    </interactant>
    <interactant intactId="EBI-15839595">
        <id>Q6UVW9</id>
        <label>CLEC2A</label>
    </interactant>
    <organismsDiffer>false</organismsDiffer>
    <experiments>3</experiments>
</comment>
<comment type="interaction">
    <interactant intactId="EBI-19027521">
        <id>Q8N6K0</id>
    </interactant>
    <interactant intactId="EBI-11989440">
        <id>Q9BXN2-6</id>
        <label>CLEC7A</label>
    </interactant>
    <organismsDiffer>false</organismsDiffer>
    <experiments>3</experiments>
</comment>
<comment type="interaction">
    <interactant intactId="EBI-19027521">
        <id>Q8N6K0</id>
    </interactant>
    <interactant intactId="EBI-12813623">
        <id>A0PK11</id>
        <label>CLRN2</label>
    </interactant>
    <organismsDiffer>false</organismsDiffer>
    <experiments>3</experiments>
</comment>
<comment type="interaction">
    <interactant intactId="EBI-19027521">
        <id>Q8N6K0</id>
    </interactant>
    <interactant intactId="EBI-2807956">
        <id>Q96FZ5</id>
        <label>CMTM7</label>
    </interactant>
    <organismsDiffer>false</organismsDiffer>
    <experiments>3</experiments>
</comment>
<comment type="interaction">
    <interactant intactId="EBI-19027521">
        <id>Q8N6K0</id>
    </interactant>
    <interactant intactId="EBI-12831318">
        <id>Q96Q80</id>
        <label>DERL3</label>
    </interactant>
    <organismsDiffer>false</organismsDiffer>
    <experiments>3</experiments>
</comment>
<comment type="interaction">
    <interactant intactId="EBI-19027521">
        <id>Q8N6K0</id>
    </interactant>
    <interactant intactId="EBI-2876774">
        <id>Q92520</id>
        <label>FAM3C</label>
    </interactant>
    <organismsDiffer>false</organismsDiffer>
    <experiments>3</experiments>
</comment>
<comment type="interaction">
    <interactant intactId="EBI-19027521">
        <id>Q8N6K0</id>
    </interactant>
    <interactant intactId="EBI-3905204">
        <id>P29033</id>
        <label>GJB2</label>
    </interactant>
    <organismsDiffer>false</organismsDiffer>
    <experiments>3</experiments>
</comment>
<comment type="interaction">
    <interactant intactId="EBI-19027521">
        <id>Q8N6K0</id>
    </interactant>
    <interactant intactId="EBI-11659720">
        <id>Q86YW7</id>
        <label>GPHB5</label>
    </interactant>
    <organismsDiffer>false</organismsDiffer>
    <experiments>3</experiments>
</comment>
<comment type="interaction">
    <interactant intactId="EBI-19027521">
        <id>Q8N6K0</id>
    </interactant>
    <interactant intactId="EBI-3932027">
        <id>P21145</id>
        <label>MAL</label>
    </interactant>
    <organismsDiffer>false</organismsDiffer>
    <experiments>3</experiments>
</comment>
<comment type="interaction">
    <interactant intactId="EBI-19027521">
        <id>Q8N6K0</id>
    </interactant>
    <interactant intactId="EBI-12051377">
        <id>Q8N912</id>
        <label>NRAC</label>
    </interactant>
    <organismsDiffer>false</organismsDiffer>
    <experiments>3</experiments>
</comment>
<comment type="interaction">
    <interactant intactId="EBI-19027521">
        <id>Q8N6K0</id>
    </interactant>
    <interactant intactId="EBI-14772355">
        <id>Q02094</id>
        <label>RHAG</label>
    </interactant>
    <organismsDiffer>false</organismsDiffer>
    <experiments>3</experiments>
</comment>
<comment type="interaction">
    <interactant intactId="EBI-19027521">
        <id>Q8N6K0</id>
    </interactant>
    <interactant intactId="EBI-8636004">
        <id>Q96GQ5</id>
        <label>RUSF1</label>
    </interactant>
    <organismsDiffer>false</organismsDiffer>
    <experiments>3</experiments>
</comment>
<comment type="interaction">
    <interactant intactId="EBI-19027521">
        <id>Q8N6K0</id>
    </interactant>
    <interactant intactId="EBI-1054782">
        <id>Q8TB61</id>
        <label>SLC35B2</label>
    </interactant>
    <organismsDiffer>false</organismsDiffer>
    <experiments>3</experiments>
</comment>
<comment type="interaction">
    <interactant intactId="EBI-19027521">
        <id>Q8N6K0</id>
    </interactant>
    <interactant intactId="EBI-8640191">
        <id>Q9NRQ5</id>
        <label>SMCO4</label>
    </interactant>
    <organismsDiffer>false</organismsDiffer>
    <experiments>3</experiments>
</comment>
<comment type="interaction">
    <interactant intactId="EBI-19027521">
        <id>Q8N6K0</id>
    </interactant>
    <interactant intactId="EBI-1045825">
        <id>P55061</id>
        <label>TMBIM6</label>
    </interactant>
    <organismsDiffer>false</organismsDiffer>
    <experiments>3</experiments>
</comment>
<comment type="interaction">
    <interactant intactId="EBI-19027521">
        <id>Q8N6K0</id>
    </interactant>
    <interactant intactId="EBI-723946">
        <id>P17152</id>
        <label>TMEM11</label>
    </interactant>
    <organismsDiffer>false</organismsDiffer>
    <experiments>3</experiments>
</comment>
<comment type="interaction">
    <interactant intactId="EBI-19027521">
        <id>Q8N6K0</id>
    </interactant>
    <interactant intactId="EBI-2844246">
        <id>Q9NV12</id>
        <label>TMEM140</label>
    </interactant>
    <organismsDiffer>false</organismsDiffer>
    <experiments>3</experiments>
</comment>
<comment type="interaction">
    <interactant intactId="EBI-19027521">
        <id>Q8N6K0</id>
    </interactant>
    <interactant intactId="EBI-348587">
        <id>Q9BVK8</id>
        <label>TMEM147</label>
    </interactant>
    <organismsDiffer>false</organismsDiffer>
    <experiments>3</experiments>
</comment>
<comment type="interaction">
    <interactant intactId="EBI-19027521">
        <id>Q8N6K0</id>
    </interactant>
    <interactant intactId="EBI-741829">
        <id>Q96HH6</id>
        <label>TMEM19</label>
    </interactant>
    <organismsDiffer>false</organismsDiffer>
    <experiments>3</experiments>
</comment>
<comment type="interaction">
    <interactant intactId="EBI-19027521">
        <id>Q8N6K0</id>
    </interactant>
    <interactant intactId="EBI-10278423">
        <id>Q8WZ59</id>
        <label>TMEM190</label>
    </interactant>
    <organismsDiffer>false</organismsDiffer>
    <experiments>3</experiments>
</comment>
<comment type="interaction">
    <interactant intactId="EBI-19027521">
        <id>Q8N6K0</id>
    </interactant>
    <interactant intactId="EBI-2548832">
        <id>Q8N661</id>
        <label>TMEM86B</label>
    </interactant>
    <organismsDiffer>false</organismsDiffer>
    <experiments>3</experiments>
</comment>
<comment type="interaction">
    <interactant intactId="EBI-19027521">
        <id>Q8N6K0</id>
    </interactant>
    <interactant intactId="EBI-718439">
        <id>O95159</id>
        <label>ZFPL1</label>
    </interactant>
    <organismsDiffer>false</organismsDiffer>
    <experiments>3</experiments>
</comment>
<comment type="subcellular location">
    <subcellularLocation>
        <location evidence="3">Membrane</location>
        <topology evidence="3">Single-pass membrane protein</topology>
    </subcellularLocation>
</comment>
<sequence length="151" mass="16649">MEYVLEVKNSPRHLLKQFTVCDVPLYDICDYNVSRDRCQELGCCFYEGVCYKKAVPIYIHVFSALIVIIAGAFVITIIYRVIQESRKEKAIPVDVALPQKSSEKAELASSSSKLGLKPASPGPPSAGPSMKSDEDKDDVTGTITEAEETED</sequence>
<reference key="1">
    <citation type="journal article" date="2004" name="Nature">
        <title>The DNA sequence and analysis of human chromosome 13.</title>
        <authorList>
            <person name="Dunham A."/>
            <person name="Matthews L.H."/>
            <person name="Burton J."/>
            <person name="Ashurst J.L."/>
            <person name="Howe K.L."/>
            <person name="Ashcroft K.J."/>
            <person name="Beare D.M."/>
            <person name="Burford D.C."/>
            <person name="Hunt S.E."/>
            <person name="Griffiths-Jones S."/>
            <person name="Jones M.C."/>
            <person name="Keenan S.J."/>
            <person name="Oliver K."/>
            <person name="Scott C.E."/>
            <person name="Ainscough R."/>
            <person name="Almeida J.P."/>
            <person name="Ambrose K.D."/>
            <person name="Andrews D.T."/>
            <person name="Ashwell R.I.S."/>
            <person name="Babbage A.K."/>
            <person name="Bagguley C.L."/>
            <person name="Bailey J."/>
            <person name="Bannerjee R."/>
            <person name="Barlow K.F."/>
            <person name="Bates K."/>
            <person name="Beasley H."/>
            <person name="Bird C.P."/>
            <person name="Bray-Allen S."/>
            <person name="Brown A.J."/>
            <person name="Brown J.Y."/>
            <person name="Burrill W."/>
            <person name="Carder C."/>
            <person name="Carter N.P."/>
            <person name="Chapman J.C."/>
            <person name="Clamp M.E."/>
            <person name="Clark S.Y."/>
            <person name="Clarke G."/>
            <person name="Clee C.M."/>
            <person name="Clegg S.C."/>
            <person name="Cobley V."/>
            <person name="Collins J.E."/>
            <person name="Corby N."/>
            <person name="Coville G.J."/>
            <person name="Deloukas P."/>
            <person name="Dhami P."/>
            <person name="Dunham I."/>
            <person name="Dunn M."/>
            <person name="Earthrowl M.E."/>
            <person name="Ellington A.G."/>
            <person name="Faulkner L."/>
            <person name="Frankish A.G."/>
            <person name="Frankland J."/>
            <person name="French L."/>
            <person name="Garner P."/>
            <person name="Garnett J."/>
            <person name="Gilbert J.G.R."/>
            <person name="Gilson C.J."/>
            <person name="Ghori J."/>
            <person name="Grafham D.V."/>
            <person name="Gribble S.M."/>
            <person name="Griffiths C."/>
            <person name="Hall R.E."/>
            <person name="Hammond S."/>
            <person name="Harley J.L."/>
            <person name="Hart E.A."/>
            <person name="Heath P.D."/>
            <person name="Howden P.J."/>
            <person name="Huckle E.J."/>
            <person name="Hunt P.J."/>
            <person name="Hunt A.R."/>
            <person name="Johnson C."/>
            <person name="Johnson D."/>
            <person name="Kay M."/>
            <person name="Kimberley A.M."/>
            <person name="King A."/>
            <person name="Laird G.K."/>
            <person name="Langford C.J."/>
            <person name="Lawlor S."/>
            <person name="Leongamornlert D.A."/>
            <person name="Lloyd D.M."/>
            <person name="Lloyd C."/>
            <person name="Loveland J.E."/>
            <person name="Lovell J."/>
            <person name="Martin S."/>
            <person name="Mashreghi-Mohammadi M."/>
            <person name="McLaren S.J."/>
            <person name="McMurray A."/>
            <person name="Milne S."/>
            <person name="Moore M.J.F."/>
            <person name="Nickerson T."/>
            <person name="Palmer S.A."/>
            <person name="Pearce A.V."/>
            <person name="Peck A.I."/>
            <person name="Pelan S."/>
            <person name="Phillimore B."/>
            <person name="Porter K.M."/>
            <person name="Rice C.M."/>
            <person name="Searle S."/>
            <person name="Sehra H.K."/>
            <person name="Shownkeen R."/>
            <person name="Skuce C.D."/>
            <person name="Smith M."/>
            <person name="Steward C.A."/>
            <person name="Sycamore N."/>
            <person name="Tester J."/>
            <person name="Thomas D.W."/>
            <person name="Tracey A."/>
            <person name="Tromans A."/>
            <person name="Tubby B."/>
            <person name="Wall M."/>
            <person name="Wallis J.M."/>
            <person name="West A.P."/>
            <person name="Whitehead S.L."/>
            <person name="Willey D.L."/>
            <person name="Wilming L."/>
            <person name="Wray P.W."/>
            <person name="Wright M.W."/>
            <person name="Young L."/>
            <person name="Coulson A."/>
            <person name="Durbin R.M."/>
            <person name="Hubbard T."/>
            <person name="Sulston J.E."/>
            <person name="Beck S."/>
            <person name="Bentley D.R."/>
            <person name="Rogers J."/>
            <person name="Ross M.T."/>
        </authorList>
    </citation>
    <scope>NUCLEOTIDE SEQUENCE [LARGE SCALE GENOMIC DNA]</scope>
</reference>
<reference key="2">
    <citation type="journal article" date="2004" name="Genome Res.">
        <title>The status, quality, and expansion of the NIH full-length cDNA project: the Mammalian Gene Collection (MGC).</title>
        <authorList>
            <consortium name="The MGC Project Team"/>
        </authorList>
    </citation>
    <scope>NUCLEOTIDE SEQUENCE [LARGE SCALE MRNA]</scope>
    <source>
        <tissue>Brain</tissue>
    </source>
</reference>
<keyword id="KW-0472">Membrane</keyword>
<keyword id="KW-1267">Proteomics identification</keyword>
<keyword id="KW-1185">Reference proteome</keyword>
<keyword id="KW-0812">Transmembrane</keyword>
<keyword id="KW-1133">Transmembrane helix</keyword>
<organism>
    <name type="scientific">Homo sapiens</name>
    <name type="common">Human</name>
    <dbReference type="NCBI Taxonomy" id="9606"/>
    <lineage>
        <taxon>Eukaryota</taxon>
        <taxon>Metazoa</taxon>
        <taxon>Chordata</taxon>
        <taxon>Craniata</taxon>
        <taxon>Vertebrata</taxon>
        <taxon>Euteleostomi</taxon>
        <taxon>Mammalia</taxon>
        <taxon>Eutheria</taxon>
        <taxon>Euarchontoglires</taxon>
        <taxon>Primates</taxon>
        <taxon>Haplorrhini</taxon>
        <taxon>Catarrhini</taxon>
        <taxon>Hominidae</taxon>
        <taxon>Homo</taxon>
    </lineage>
</organism>